<name>YBHL_ECOL6</name>
<dbReference type="EMBL" id="AE014075">
    <property type="protein sequence ID" value="AAN79341.1"/>
    <property type="status" value="ALT_INIT"/>
    <property type="molecule type" value="Genomic_DNA"/>
</dbReference>
<dbReference type="RefSeq" id="WP_000373624.1">
    <property type="nucleotide sequence ID" value="NZ_CP051263.1"/>
</dbReference>
<dbReference type="SMR" id="P0AAC5"/>
<dbReference type="STRING" id="199310.c0868"/>
<dbReference type="KEGG" id="ecc:c0868"/>
<dbReference type="eggNOG" id="COG0670">
    <property type="taxonomic scope" value="Bacteria"/>
</dbReference>
<dbReference type="HOGENOM" id="CLU_058671_1_0_6"/>
<dbReference type="Proteomes" id="UP000001410">
    <property type="component" value="Chromosome"/>
</dbReference>
<dbReference type="GO" id="GO:0005886">
    <property type="term" value="C:plasma membrane"/>
    <property type="evidence" value="ECO:0007669"/>
    <property type="project" value="UniProtKB-SubCell"/>
</dbReference>
<dbReference type="CDD" id="cd10432">
    <property type="entry name" value="BI-1-like_bacterial"/>
    <property type="match status" value="1"/>
</dbReference>
<dbReference type="InterPro" id="IPR006214">
    <property type="entry name" value="Bax_inhibitor_1-related"/>
</dbReference>
<dbReference type="PANTHER" id="PTHR23291">
    <property type="entry name" value="BAX INHIBITOR-RELATED"/>
    <property type="match status" value="1"/>
</dbReference>
<dbReference type="PANTHER" id="PTHR23291:SF50">
    <property type="entry name" value="PROTEIN LIFEGUARD 4"/>
    <property type="match status" value="1"/>
</dbReference>
<dbReference type="Pfam" id="PF01027">
    <property type="entry name" value="Bax1-I"/>
    <property type="match status" value="1"/>
</dbReference>
<proteinExistence type="inferred from homology"/>
<organism>
    <name type="scientific">Escherichia coli O6:H1 (strain CFT073 / ATCC 700928 / UPEC)</name>
    <dbReference type="NCBI Taxonomy" id="199310"/>
    <lineage>
        <taxon>Bacteria</taxon>
        <taxon>Pseudomonadati</taxon>
        <taxon>Pseudomonadota</taxon>
        <taxon>Gammaproteobacteria</taxon>
        <taxon>Enterobacterales</taxon>
        <taxon>Enterobacteriaceae</taxon>
        <taxon>Escherichia</taxon>
    </lineage>
</organism>
<accession>P0AAC5</accession>
<accession>P75768</accession>
<evidence type="ECO:0000250" key="1"/>
<evidence type="ECO:0000255" key="2"/>
<evidence type="ECO:0000305" key="3"/>
<sequence>MDRFPRSDSIVQPRAGLQTYMAQVYGWMTVGLLLTAFVAWYAANSAAVMELLFTNRVFLIGLIIAQLALVIVLSAMIQKLSAGVTTMLFMLYSALTGLTLSSIFIVYTAASIASTFVVTAGMFGAMSLYGYTTKRDLSGFGNMLFMALIGIVLASLVNFWLKSEALMWAVTYIGVIVFVGLTAYDTQKLKNMGEQIDTRDTSNLRKYSILGALTLYLDFINLFLMLLRIFGNRR</sequence>
<comment type="subcellular location">
    <subcellularLocation>
        <location evidence="1">Cell inner membrane</location>
        <topology evidence="1">Multi-pass membrane protein</topology>
    </subcellularLocation>
</comment>
<comment type="similarity">
    <text evidence="3">Belongs to the BI1 family.</text>
</comment>
<comment type="sequence caution" evidence="3">
    <conflict type="erroneous initiation">
        <sequence resource="EMBL-CDS" id="AAN79341"/>
    </conflict>
</comment>
<gene>
    <name type="primary">ybhL</name>
    <name type="ordered locus">c0868</name>
</gene>
<keyword id="KW-0997">Cell inner membrane</keyword>
<keyword id="KW-1003">Cell membrane</keyword>
<keyword id="KW-0472">Membrane</keyword>
<keyword id="KW-1185">Reference proteome</keyword>
<keyword id="KW-0812">Transmembrane</keyword>
<keyword id="KW-1133">Transmembrane helix</keyword>
<protein>
    <recommendedName>
        <fullName>Inner membrane protein YbhL</fullName>
    </recommendedName>
</protein>
<reference key="1">
    <citation type="journal article" date="2002" name="Proc. Natl. Acad. Sci. U.S.A.">
        <title>Extensive mosaic structure revealed by the complete genome sequence of uropathogenic Escherichia coli.</title>
        <authorList>
            <person name="Welch R.A."/>
            <person name="Burland V."/>
            <person name="Plunkett G. III"/>
            <person name="Redford P."/>
            <person name="Roesch P."/>
            <person name="Rasko D."/>
            <person name="Buckles E.L."/>
            <person name="Liou S.-R."/>
            <person name="Boutin A."/>
            <person name="Hackett J."/>
            <person name="Stroud D."/>
            <person name="Mayhew G.F."/>
            <person name="Rose D.J."/>
            <person name="Zhou S."/>
            <person name="Schwartz D.C."/>
            <person name="Perna N.T."/>
            <person name="Mobley H.L.T."/>
            <person name="Donnenberg M.S."/>
            <person name="Blattner F.R."/>
        </authorList>
    </citation>
    <scope>NUCLEOTIDE SEQUENCE [LARGE SCALE GENOMIC DNA]</scope>
    <source>
        <strain>CFT073 / ATCC 700928 / UPEC</strain>
    </source>
</reference>
<feature type="chain" id="PRO_0000179101" description="Inner membrane protein YbhL">
    <location>
        <begin position="1"/>
        <end position="234"/>
    </location>
</feature>
<feature type="topological domain" description="Periplasmic" evidence="2">
    <location>
        <begin position="1"/>
        <end position="23"/>
    </location>
</feature>
<feature type="transmembrane region" description="Helical" evidence="2">
    <location>
        <begin position="24"/>
        <end position="44"/>
    </location>
</feature>
<feature type="topological domain" description="Cytoplasmic" evidence="2">
    <location>
        <begin position="45"/>
        <end position="56"/>
    </location>
</feature>
<feature type="transmembrane region" description="Helical" evidence="2">
    <location>
        <begin position="57"/>
        <end position="77"/>
    </location>
</feature>
<feature type="topological domain" description="Periplasmic" evidence="2">
    <location>
        <begin position="78"/>
        <end position="79"/>
    </location>
</feature>
<feature type="transmembrane region" description="Helical" evidence="2">
    <location>
        <begin position="80"/>
        <end position="100"/>
    </location>
</feature>
<feature type="topological domain" description="Cytoplasmic" evidence="2">
    <location>
        <begin position="101"/>
        <end position="102"/>
    </location>
</feature>
<feature type="transmembrane region" description="Helical" evidence="2">
    <location>
        <begin position="103"/>
        <end position="123"/>
    </location>
</feature>
<feature type="topological domain" description="Periplasmic" evidence="2">
    <location>
        <begin position="124"/>
        <end position="136"/>
    </location>
</feature>
<feature type="transmembrane region" description="Helical" evidence="2">
    <location>
        <begin position="137"/>
        <end position="157"/>
    </location>
</feature>
<feature type="topological domain" description="Cytoplasmic" evidence="2">
    <location>
        <begin position="158"/>
        <end position="163"/>
    </location>
</feature>
<feature type="transmembrane region" description="Helical" evidence="2">
    <location>
        <begin position="164"/>
        <end position="184"/>
    </location>
</feature>
<feature type="topological domain" description="Periplasmic" evidence="2">
    <location>
        <begin position="185"/>
        <end position="206"/>
    </location>
</feature>
<feature type="transmembrane region" description="Helical" evidence="2">
    <location>
        <begin position="207"/>
        <end position="227"/>
    </location>
</feature>
<feature type="topological domain" description="Cytoplasmic" evidence="2">
    <location>
        <begin position="228"/>
        <end position="234"/>
    </location>
</feature>